<name>LOLB_YERPB</name>
<sequence>MPMRKRHFYRLLPLASLLLAACTIPVSKGPATSPTSPQWRQHEQQLQQLGQFETRGAFAYLSDKQKVYARFFWQQTSPERYRLLLTNPLGSTELELVVQPGVTQLTDNQGKRYVSDDPQEMIQKLTGMSIPLESLRQWILGLPGDTPNFTLDDKYRLKKLTYQQNGVTWVVDYQEYNTQVTPPLPSRLELNQDGQRIKLKMDSWTIK</sequence>
<dbReference type="EMBL" id="CP001048">
    <property type="protein sequence ID" value="ACC89027.1"/>
    <property type="molecule type" value="Genomic_DNA"/>
</dbReference>
<dbReference type="RefSeq" id="WP_011192397.1">
    <property type="nucleotide sequence ID" value="NZ_CP009780.1"/>
</dbReference>
<dbReference type="SMR" id="B2K2Y8"/>
<dbReference type="KEGG" id="ypb:YPTS_2061"/>
<dbReference type="PATRIC" id="fig|502801.10.peg.1450"/>
<dbReference type="GO" id="GO:0009279">
    <property type="term" value="C:cell outer membrane"/>
    <property type="evidence" value="ECO:0007669"/>
    <property type="project" value="UniProtKB-SubCell"/>
</dbReference>
<dbReference type="GO" id="GO:0044874">
    <property type="term" value="P:lipoprotein localization to outer membrane"/>
    <property type="evidence" value="ECO:0007669"/>
    <property type="project" value="UniProtKB-UniRule"/>
</dbReference>
<dbReference type="GO" id="GO:0015031">
    <property type="term" value="P:protein transport"/>
    <property type="evidence" value="ECO:0007669"/>
    <property type="project" value="UniProtKB-KW"/>
</dbReference>
<dbReference type="CDD" id="cd16326">
    <property type="entry name" value="LolB"/>
    <property type="match status" value="1"/>
</dbReference>
<dbReference type="Gene3D" id="2.50.20.10">
    <property type="entry name" value="Lipoprotein localisation LolA/LolB/LppX"/>
    <property type="match status" value="1"/>
</dbReference>
<dbReference type="HAMAP" id="MF_00233">
    <property type="entry name" value="LolB"/>
    <property type="match status" value="1"/>
</dbReference>
<dbReference type="InterPro" id="IPR029046">
    <property type="entry name" value="LolA/LolB/LppX"/>
</dbReference>
<dbReference type="InterPro" id="IPR004565">
    <property type="entry name" value="OM_lipoprot_LolB"/>
</dbReference>
<dbReference type="NCBIfam" id="TIGR00548">
    <property type="entry name" value="lolB"/>
    <property type="match status" value="1"/>
</dbReference>
<dbReference type="Pfam" id="PF03550">
    <property type="entry name" value="LolB"/>
    <property type="match status" value="1"/>
</dbReference>
<dbReference type="SUPFAM" id="SSF89392">
    <property type="entry name" value="Prokaryotic lipoproteins and lipoprotein localization factors"/>
    <property type="match status" value="1"/>
</dbReference>
<dbReference type="PROSITE" id="PS51257">
    <property type="entry name" value="PROKAR_LIPOPROTEIN"/>
    <property type="match status" value="1"/>
</dbReference>
<protein>
    <recommendedName>
        <fullName evidence="1">Outer-membrane lipoprotein LolB</fullName>
    </recommendedName>
</protein>
<proteinExistence type="inferred from homology"/>
<reference key="1">
    <citation type="submission" date="2008-04" db="EMBL/GenBank/DDBJ databases">
        <title>Complete sequence of Yersinia pseudotuberculosis PB1/+.</title>
        <authorList>
            <person name="Copeland A."/>
            <person name="Lucas S."/>
            <person name="Lapidus A."/>
            <person name="Glavina del Rio T."/>
            <person name="Dalin E."/>
            <person name="Tice H."/>
            <person name="Bruce D."/>
            <person name="Goodwin L."/>
            <person name="Pitluck S."/>
            <person name="Munk A.C."/>
            <person name="Brettin T."/>
            <person name="Detter J.C."/>
            <person name="Han C."/>
            <person name="Tapia R."/>
            <person name="Schmutz J."/>
            <person name="Larimer F."/>
            <person name="Land M."/>
            <person name="Hauser L."/>
            <person name="Challacombe J.F."/>
            <person name="Green L."/>
            <person name="Lindler L.E."/>
            <person name="Nikolich M.P."/>
            <person name="Richardson P."/>
        </authorList>
    </citation>
    <scope>NUCLEOTIDE SEQUENCE [LARGE SCALE GENOMIC DNA]</scope>
    <source>
        <strain>PB1/+</strain>
    </source>
</reference>
<evidence type="ECO:0000255" key="1">
    <source>
        <dbReference type="HAMAP-Rule" id="MF_00233"/>
    </source>
</evidence>
<gene>
    <name evidence="1" type="primary">lolB</name>
    <name type="ordered locus">YPTS_2061</name>
</gene>
<accession>B2K2Y8</accession>
<feature type="signal peptide" evidence="1">
    <location>
        <begin position="1"/>
        <end position="21"/>
    </location>
</feature>
<feature type="chain" id="PRO_1000100514" description="Outer-membrane lipoprotein LolB">
    <location>
        <begin position="22"/>
        <end position="207"/>
    </location>
</feature>
<feature type="lipid moiety-binding region" description="N-palmitoyl cysteine" evidence="1">
    <location>
        <position position="22"/>
    </location>
</feature>
<feature type="lipid moiety-binding region" description="S-diacylglycerol cysteine" evidence="1">
    <location>
        <position position="22"/>
    </location>
</feature>
<comment type="function">
    <text evidence="1">Plays a critical role in the incorporation of lipoproteins in the outer membrane after they are released by the LolA protein.</text>
</comment>
<comment type="subunit">
    <text evidence="1">Monomer.</text>
</comment>
<comment type="subcellular location">
    <subcellularLocation>
        <location evidence="1">Cell outer membrane</location>
        <topology evidence="1">Lipid-anchor</topology>
    </subcellularLocation>
</comment>
<comment type="similarity">
    <text evidence="1">Belongs to the LolB family.</text>
</comment>
<keyword id="KW-0998">Cell outer membrane</keyword>
<keyword id="KW-0143">Chaperone</keyword>
<keyword id="KW-0449">Lipoprotein</keyword>
<keyword id="KW-0472">Membrane</keyword>
<keyword id="KW-0564">Palmitate</keyword>
<keyword id="KW-0653">Protein transport</keyword>
<keyword id="KW-0732">Signal</keyword>
<keyword id="KW-0813">Transport</keyword>
<organism>
    <name type="scientific">Yersinia pseudotuberculosis serotype IB (strain PB1/+)</name>
    <dbReference type="NCBI Taxonomy" id="502801"/>
    <lineage>
        <taxon>Bacteria</taxon>
        <taxon>Pseudomonadati</taxon>
        <taxon>Pseudomonadota</taxon>
        <taxon>Gammaproteobacteria</taxon>
        <taxon>Enterobacterales</taxon>
        <taxon>Yersiniaceae</taxon>
        <taxon>Yersinia</taxon>
    </lineage>
</organism>